<proteinExistence type="inferred from homology"/>
<dbReference type="EMBL" id="CT573326">
    <property type="protein sequence ID" value="CAK13437.1"/>
    <property type="molecule type" value="Genomic_DNA"/>
</dbReference>
<dbReference type="RefSeq" id="WP_008089819.1">
    <property type="nucleotide sequence ID" value="NC_008027.1"/>
</dbReference>
<dbReference type="SMR" id="Q1IFW5"/>
<dbReference type="STRING" id="384676.PSEEN0491"/>
<dbReference type="GeneID" id="97165980"/>
<dbReference type="KEGG" id="pen:PSEEN0491"/>
<dbReference type="eggNOG" id="COG0088">
    <property type="taxonomic scope" value="Bacteria"/>
</dbReference>
<dbReference type="HOGENOM" id="CLU_041575_5_2_6"/>
<dbReference type="OrthoDB" id="9803201at2"/>
<dbReference type="Proteomes" id="UP000000658">
    <property type="component" value="Chromosome"/>
</dbReference>
<dbReference type="GO" id="GO:1990904">
    <property type="term" value="C:ribonucleoprotein complex"/>
    <property type="evidence" value="ECO:0007669"/>
    <property type="project" value="UniProtKB-KW"/>
</dbReference>
<dbReference type="GO" id="GO:0005840">
    <property type="term" value="C:ribosome"/>
    <property type="evidence" value="ECO:0007669"/>
    <property type="project" value="UniProtKB-KW"/>
</dbReference>
<dbReference type="GO" id="GO:0019843">
    <property type="term" value="F:rRNA binding"/>
    <property type="evidence" value="ECO:0007669"/>
    <property type="project" value="UniProtKB-UniRule"/>
</dbReference>
<dbReference type="GO" id="GO:0003735">
    <property type="term" value="F:structural constituent of ribosome"/>
    <property type="evidence" value="ECO:0007669"/>
    <property type="project" value="InterPro"/>
</dbReference>
<dbReference type="GO" id="GO:0006412">
    <property type="term" value="P:translation"/>
    <property type="evidence" value="ECO:0007669"/>
    <property type="project" value="UniProtKB-UniRule"/>
</dbReference>
<dbReference type="FunFam" id="3.40.1370.10:FF:000001">
    <property type="entry name" value="50S ribosomal protein L4"/>
    <property type="match status" value="1"/>
</dbReference>
<dbReference type="Gene3D" id="3.40.1370.10">
    <property type="match status" value="1"/>
</dbReference>
<dbReference type="HAMAP" id="MF_01328_B">
    <property type="entry name" value="Ribosomal_uL4_B"/>
    <property type="match status" value="1"/>
</dbReference>
<dbReference type="InterPro" id="IPR002136">
    <property type="entry name" value="Ribosomal_uL4"/>
</dbReference>
<dbReference type="InterPro" id="IPR013005">
    <property type="entry name" value="Ribosomal_uL4-like"/>
</dbReference>
<dbReference type="InterPro" id="IPR023574">
    <property type="entry name" value="Ribosomal_uL4_dom_sf"/>
</dbReference>
<dbReference type="NCBIfam" id="TIGR03953">
    <property type="entry name" value="rplD_bact"/>
    <property type="match status" value="1"/>
</dbReference>
<dbReference type="PANTHER" id="PTHR10746">
    <property type="entry name" value="50S RIBOSOMAL PROTEIN L4"/>
    <property type="match status" value="1"/>
</dbReference>
<dbReference type="PANTHER" id="PTHR10746:SF6">
    <property type="entry name" value="LARGE RIBOSOMAL SUBUNIT PROTEIN UL4M"/>
    <property type="match status" value="1"/>
</dbReference>
<dbReference type="Pfam" id="PF00573">
    <property type="entry name" value="Ribosomal_L4"/>
    <property type="match status" value="1"/>
</dbReference>
<dbReference type="SUPFAM" id="SSF52166">
    <property type="entry name" value="Ribosomal protein L4"/>
    <property type="match status" value="1"/>
</dbReference>
<comment type="function">
    <text evidence="1">One of the primary rRNA binding proteins, this protein initially binds near the 5'-end of the 23S rRNA. It is important during the early stages of 50S assembly. It makes multiple contacts with different domains of the 23S rRNA in the assembled 50S subunit and ribosome.</text>
</comment>
<comment type="function">
    <text evidence="1">Forms part of the polypeptide exit tunnel.</text>
</comment>
<comment type="subunit">
    <text evidence="1">Part of the 50S ribosomal subunit.</text>
</comment>
<comment type="similarity">
    <text evidence="1">Belongs to the universal ribosomal protein uL4 family.</text>
</comment>
<protein>
    <recommendedName>
        <fullName evidence="1">Large ribosomal subunit protein uL4</fullName>
    </recommendedName>
    <alternativeName>
        <fullName evidence="3">50S ribosomal protein L4</fullName>
    </alternativeName>
</protein>
<name>RL4_PSEE4</name>
<gene>
    <name evidence="1" type="primary">rplD</name>
    <name type="ordered locus">PSEEN0491</name>
</gene>
<reference key="1">
    <citation type="journal article" date="2006" name="Nat. Biotechnol.">
        <title>Complete genome sequence of the entomopathogenic and metabolically versatile soil bacterium Pseudomonas entomophila.</title>
        <authorList>
            <person name="Vodovar N."/>
            <person name="Vallenet D."/>
            <person name="Cruveiller S."/>
            <person name="Rouy Z."/>
            <person name="Barbe V."/>
            <person name="Acosta C."/>
            <person name="Cattolico L."/>
            <person name="Jubin C."/>
            <person name="Lajus A."/>
            <person name="Segurens B."/>
            <person name="Vacherie B."/>
            <person name="Wincker P."/>
            <person name="Weissenbach J."/>
            <person name="Lemaitre B."/>
            <person name="Medigue C."/>
            <person name="Boccard F."/>
        </authorList>
    </citation>
    <scope>NUCLEOTIDE SEQUENCE [LARGE SCALE GENOMIC DNA]</scope>
    <source>
        <strain>L48</strain>
    </source>
</reference>
<sequence length="200" mass="21838">MQLNVNDAQAIEVSELTFGGEFNETLVHQAVVAYMAGGRQGTKQQKTRSDVAGGGKRPWRQKGTGRARAGTTRGPIWRGGGVTFAARPQDHSQKLNKKMYRAALRSILAELVRSDRLVVVQDFAVEAPKTKDLLNKLNGMGLNDVLIVSDAVDQNLYLAARNLPHVDVRDVQGSDPVSLIAYEKVLITVSAVKKFEELLG</sequence>
<feature type="chain" id="PRO_1000052471" description="Large ribosomal subunit protein uL4">
    <location>
        <begin position="1"/>
        <end position="200"/>
    </location>
</feature>
<feature type="region of interest" description="Disordered" evidence="2">
    <location>
        <begin position="38"/>
        <end position="72"/>
    </location>
</feature>
<keyword id="KW-0687">Ribonucleoprotein</keyword>
<keyword id="KW-0689">Ribosomal protein</keyword>
<keyword id="KW-0694">RNA-binding</keyword>
<keyword id="KW-0699">rRNA-binding</keyword>
<evidence type="ECO:0000255" key="1">
    <source>
        <dbReference type="HAMAP-Rule" id="MF_01328"/>
    </source>
</evidence>
<evidence type="ECO:0000256" key="2">
    <source>
        <dbReference type="SAM" id="MobiDB-lite"/>
    </source>
</evidence>
<evidence type="ECO:0000305" key="3"/>
<accession>Q1IFW5</accession>
<organism>
    <name type="scientific">Pseudomonas entomophila (strain L48)</name>
    <dbReference type="NCBI Taxonomy" id="384676"/>
    <lineage>
        <taxon>Bacteria</taxon>
        <taxon>Pseudomonadati</taxon>
        <taxon>Pseudomonadota</taxon>
        <taxon>Gammaproteobacteria</taxon>
        <taxon>Pseudomonadales</taxon>
        <taxon>Pseudomonadaceae</taxon>
        <taxon>Pseudomonas</taxon>
    </lineage>
</organism>